<organism>
    <name type="scientific">Paraburkholderia xenovorans (strain LB400)</name>
    <dbReference type="NCBI Taxonomy" id="266265"/>
    <lineage>
        <taxon>Bacteria</taxon>
        <taxon>Pseudomonadati</taxon>
        <taxon>Pseudomonadota</taxon>
        <taxon>Betaproteobacteria</taxon>
        <taxon>Burkholderiales</taxon>
        <taxon>Burkholderiaceae</taxon>
        <taxon>Paraburkholderia</taxon>
    </lineage>
</organism>
<dbReference type="EC" id="2.1.2.9" evidence="1"/>
<dbReference type="EMBL" id="CP000270">
    <property type="protein sequence ID" value="ABE28585.1"/>
    <property type="molecule type" value="Genomic_DNA"/>
</dbReference>
<dbReference type="RefSeq" id="WP_011486443.1">
    <property type="nucleotide sequence ID" value="NC_007951.1"/>
</dbReference>
<dbReference type="SMR" id="Q147A4"/>
<dbReference type="STRING" id="266265.Bxe_A4415"/>
<dbReference type="KEGG" id="bxb:DR64_2090"/>
<dbReference type="KEGG" id="bxe:Bxe_A4415"/>
<dbReference type="PATRIC" id="fig|266265.5.peg.49"/>
<dbReference type="eggNOG" id="COG0223">
    <property type="taxonomic scope" value="Bacteria"/>
</dbReference>
<dbReference type="OrthoDB" id="9802815at2"/>
<dbReference type="Proteomes" id="UP000001817">
    <property type="component" value="Chromosome 1"/>
</dbReference>
<dbReference type="GO" id="GO:0005829">
    <property type="term" value="C:cytosol"/>
    <property type="evidence" value="ECO:0007669"/>
    <property type="project" value="TreeGrafter"/>
</dbReference>
<dbReference type="GO" id="GO:0004479">
    <property type="term" value="F:methionyl-tRNA formyltransferase activity"/>
    <property type="evidence" value="ECO:0007669"/>
    <property type="project" value="UniProtKB-UniRule"/>
</dbReference>
<dbReference type="CDD" id="cd08646">
    <property type="entry name" value="FMT_core_Met-tRNA-FMT_N"/>
    <property type="match status" value="1"/>
</dbReference>
<dbReference type="CDD" id="cd08704">
    <property type="entry name" value="Met_tRNA_FMT_C"/>
    <property type="match status" value="1"/>
</dbReference>
<dbReference type="Gene3D" id="3.10.25.10">
    <property type="entry name" value="Formyl transferase, C-terminal domain"/>
    <property type="match status" value="1"/>
</dbReference>
<dbReference type="Gene3D" id="3.40.50.170">
    <property type="entry name" value="Formyl transferase, N-terminal domain"/>
    <property type="match status" value="1"/>
</dbReference>
<dbReference type="HAMAP" id="MF_00182">
    <property type="entry name" value="Formyl_trans"/>
    <property type="match status" value="1"/>
</dbReference>
<dbReference type="InterPro" id="IPR005794">
    <property type="entry name" value="Fmt"/>
</dbReference>
<dbReference type="InterPro" id="IPR005793">
    <property type="entry name" value="Formyl_trans_C"/>
</dbReference>
<dbReference type="InterPro" id="IPR037022">
    <property type="entry name" value="Formyl_trans_C_sf"/>
</dbReference>
<dbReference type="InterPro" id="IPR002376">
    <property type="entry name" value="Formyl_transf_N"/>
</dbReference>
<dbReference type="InterPro" id="IPR036477">
    <property type="entry name" value="Formyl_transf_N_sf"/>
</dbReference>
<dbReference type="InterPro" id="IPR011034">
    <property type="entry name" value="Formyl_transferase-like_C_sf"/>
</dbReference>
<dbReference type="InterPro" id="IPR001555">
    <property type="entry name" value="GART_AS"/>
</dbReference>
<dbReference type="InterPro" id="IPR044135">
    <property type="entry name" value="Met-tRNA-FMT_C"/>
</dbReference>
<dbReference type="InterPro" id="IPR041711">
    <property type="entry name" value="Met-tRNA-FMT_N"/>
</dbReference>
<dbReference type="NCBIfam" id="TIGR00460">
    <property type="entry name" value="fmt"/>
    <property type="match status" value="1"/>
</dbReference>
<dbReference type="PANTHER" id="PTHR11138">
    <property type="entry name" value="METHIONYL-TRNA FORMYLTRANSFERASE"/>
    <property type="match status" value="1"/>
</dbReference>
<dbReference type="PANTHER" id="PTHR11138:SF5">
    <property type="entry name" value="METHIONYL-TRNA FORMYLTRANSFERASE, MITOCHONDRIAL"/>
    <property type="match status" value="1"/>
</dbReference>
<dbReference type="Pfam" id="PF02911">
    <property type="entry name" value="Formyl_trans_C"/>
    <property type="match status" value="1"/>
</dbReference>
<dbReference type="Pfam" id="PF00551">
    <property type="entry name" value="Formyl_trans_N"/>
    <property type="match status" value="1"/>
</dbReference>
<dbReference type="SUPFAM" id="SSF50486">
    <property type="entry name" value="FMT C-terminal domain-like"/>
    <property type="match status" value="1"/>
</dbReference>
<dbReference type="SUPFAM" id="SSF53328">
    <property type="entry name" value="Formyltransferase"/>
    <property type="match status" value="1"/>
</dbReference>
<dbReference type="PROSITE" id="PS00373">
    <property type="entry name" value="GART"/>
    <property type="match status" value="1"/>
</dbReference>
<evidence type="ECO:0000255" key="1">
    <source>
        <dbReference type="HAMAP-Rule" id="MF_00182"/>
    </source>
</evidence>
<keyword id="KW-0648">Protein biosynthesis</keyword>
<keyword id="KW-1185">Reference proteome</keyword>
<keyword id="KW-0808">Transferase</keyword>
<gene>
    <name evidence="1" type="primary">fmt</name>
    <name type="ordered locus">Bxeno_A0047</name>
    <name type="ORF">Bxe_A4415</name>
</gene>
<reference key="1">
    <citation type="journal article" date="2006" name="Proc. Natl. Acad. Sci. U.S.A.">
        <title>Burkholderia xenovorans LB400 harbors a multi-replicon, 9.73-Mbp genome shaped for versatility.</title>
        <authorList>
            <person name="Chain P.S.G."/>
            <person name="Denef V.J."/>
            <person name="Konstantinidis K.T."/>
            <person name="Vergez L.M."/>
            <person name="Agullo L."/>
            <person name="Reyes V.L."/>
            <person name="Hauser L."/>
            <person name="Cordova M."/>
            <person name="Gomez L."/>
            <person name="Gonzalez M."/>
            <person name="Land M."/>
            <person name="Lao V."/>
            <person name="Larimer F."/>
            <person name="LiPuma J.J."/>
            <person name="Mahenthiralingam E."/>
            <person name="Malfatti S.A."/>
            <person name="Marx C.J."/>
            <person name="Parnell J.J."/>
            <person name="Ramette A."/>
            <person name="Richardson P."/>
            <person name="Seeger M."/>
            <person name="Smith D."/>
            <person name="Spilker T."/>
            <person name="Sul W.J."/>
            <person name="Tsoi T.V."/>
            <person name="Ulrich L.E."/>
            <person name="Zhulin I.B."/>
            <person name="Tiedje J.M."/>
        </authorList>
    </citation>
    <scope>NUCLEOTIDE SEQUENCE [LARGE SCALE GENOMIC DNA]</scope>
    <source>
        <strain>LB400</strain>
    </source>
</reference>
<comment type="function">
    <text evidence="1">Attaches a formyl group to the free amino group of methionyl-tRNA(fMet). The formyl group appears to play a dual role in the initiator identity of N-formylmethionyl-tRNA by promoting its recognition by IF2 and preventing the misappropriation of this tRNA by the elongation apparatus.</text>
</comment>
<comment type="catalytic activity">
    <reaction evidence="1">
        <text>L-methionyl-tRNA(fMet) + (6R)-10-formyltetrahydrofolate = N-formyl-L-methionyl-tRNA(fMet) + (6S)-5,6,7,8-tetrahydrofolate + H(+)</text>
        <dbReference type="Rhea" id="RHEA:24380"/>
        <dbReference type="Rhea" id="RHEA-COMP:9952"/>
        <dbReference type="Rhea" id="RHEA-COMP:9953"/>
        <dbReference type="ChEBI" id="CHEBI:15378"/>
        <dbReference type="ChEBI" id="CHEBI:57453"/>
        <dbReference type="ChEBI" id="CHEBI:78530"/>
        <dbReference type="ChEBI" id="CHEBI:78844"/>
        <dbReference type="ChEBI" id="CHEBI:195366"/>
        <dbReference type="EC" id="2.1.2.9"/>
    </reaction>
</comment>
<comment type="similarity">
    <text evidence="1">Belongs to the Fmt family.</text>
</comment>
<accession>Q147A4</accession>
<sequence length="328" mass="34346">MSHSLRVIFAGTPEFAAAALAAIHGAGFPVPLVLTQPDRPAGRGMKLQASPVKRYAQEHGLAVAQPPSLRRAGKYPEQAAAAIGQLRATPHDVMVVAAYGLILPQEVLDIPPLGCINIHASLLPRWRGAAPIHRAIEAGDAETGITLMQMDVGLDTGAMISETRTAISGDDTTATLHDRLAQDGAKLIVEALVELERTGRLAATPQPAEGVTYAEKIGKHEAALDWRRPAAVLARQVRAFDPFPGGVGTLEDGTSIKIWAAIPADTKAGGAPGTIAEVTPEGVVVACGEGALRLTQLQKPGGKRLPVREFLAGSTLAVGQRFQLPEAK</sequence>
<proteinExistence type="inferred from homology"/>
<protein>
    <recommendedName>
        <fullName evidence="1">Methionyl-tRNA formyltransferase</fullName>
        <ecNumber evidence="1">2.1.2.9</ecNumber>
    </recommendedName>
</protein>
<name>FMT_PARXL</name>
<feature type="chain" id="PRO_1000020039" description="Methionyl-tRNA formyltransferase">
    <location>
        <begin position="1"/>
        <end position="328"/>
    </location>
</feature>
<feature type="binding site" evidence="1">
    <location>
        <begin position="121"/>
        <end position="124"/>
    </location>
    <ligand>
        <name>(6S)-5,6,7,8-tetrahydrofolate</name>
        <dbReference type="ChEBI" id="CHEBI:57453"/>
    </ligand>
</feature>